<protein>
    <recommendedName>
        <fullName evidence="14">Kinesin-like protein KIN-14C</fullName>
    </recommendedName>
    <alternativeName>
        <fullName evidence="11">AtKIN14a</fullName>
    </alternativeName>
    <alternativeName>
        <fullName evidence="12 13">Kinesin-like protein KatA</fullName>
    </alternativeName>
</protein>
<evidence type="ECO:0000255" key="1"/>
<evidence type="ECO:0000255" key="2">
    <source>
        <dbReference type="PROSITE-ProRule" id="PRU00283"/>
    </source>
</evidence>
<evidence type="ECO:0000256" key="3">
    <source>
        <dbReference type="SAM" id="MobiDB-lite"/>
    </source>
</evidence>
<evidence type="ECO:0000269" key="4">
    <source>
    </source>
</evidence>
<evidence type="ECO:0000269" key="5">
    <source>
    </source>
</evidence>
<evidence type="ECO:0000269" key="6">
    <source>
    </source>
</evidence>
<evidence type="ECO:0000269" key="7">
    <source>
    </source>
</evidence>
<evidence type="ECO:0000269" key="8">
    <source>
    </source>
</evidence>
<evidence type="ECO:0000303" key="9">
    <source>
    </source>
</evidence>
<evidence type="ECO:0000303" key="10">
    <source>
    </source>
</evidence>
<evidence type="ECO:0000303" key="11">
    <source>
    </source>
</evidence>
<evidence type="ECO:0000303" key="12">
    <source>
    </source>
</evidence>
<evidence type="ECO:0000303" key="13">
    <source>
    </source>
</evidence>
<evidence type="ECO:0000305" key="14"/>
<evidence type="ECO:0000312" key="15">
    <source>
        <dbReference type="Araport" id="AT4G21270"/>
    </source>
</evidence>
<evidence type="ECO:0000312" key="16">
    <source>
        <dbReference type="EMBL" id="BAA01972.1"/>
    </source>
</evidence>
<evidence type="ECO:0000312" key="17">
    <source>
        <dbReference type="EMBL" id="CAA17546.1"/>
    </source>
</evidence>
<evidence type="ECO:0000312" key="18">
    <source>
        <dbReference type="EMBL" id="CAA20193.1"/>
    </source>
</evidence>
<name>KN14C_ARATH</name>
<keyword id="KW-0067">ATP-binding</keyword>
<keyword id="KW-0131">Cell cycle</keyword>
<keyword id="KW-0132">Cell division</keyword>
<keyword id="KW-0137">Centromere</keyword>
<keyword id="KW-0158">Chromosome</keyword>
<keyword id="KW-0175">Coiled coil</keyword>
<keyword id="KW-0963">Cytoplasm</keyword>
<keyword id="KW-0206">Cytoskeleton</keyword>
<keyword id="KW-0995">Kinetochore</keyword>
<keyword id="KW-0469">Meiosis</keyword>
<keyword id="KW-0493">Microtubule</keyword>
<keyword id="KW-0498">Mitosis</keyword>
<keyword id="KW-0505">Motor protein</keyword>
<keyword id="KW-0547">Nucleotide-binding</keyword>
<keyword id="KW-1185">Reference proteome</keyword>
<organism>
    <name type="scientific">Arabidopsis thaliana</name>
    <name type="common">Mouse-ear cress</name>
    <dbReference type="NCBI Taxonomy" id="3702"/>
    <lineage>
        <taxon>Eukaryota</taxon>
        <taxon>Viridiplantae</taxon>
        <taxon>Streptophyta</taxon>
        <taxon>Embryophyta</taxon>
        <taxon>Tracheophyta</taxon>
        <taxon>Spermatophyta</taxon>
        <taxon>Magnoliopsida</taxon>
        <taxon>eudicotyledons</taxon>
        <taxon>Gunneridae</taxon>
        <taxon>Pentapetalae</taxon>
        <taxon>rosids</taxon>
        <taxon>malvids</taxon>
        <taxon>Brassicales</taxon>
        <taxon>Brassicaceae</taxon>
        <taxon>Camelineae</taxon>
        <taxon>Arabidopsis</taxon>
    </lineage>
</organism>
<proteinExistence type="evidence at transcript level"/>
<dbReference type="EMBL" id="D11371">
    <property type="protein sequence ID" value="BAA01972.1"/>
    <property type="molecule type" value="mRNA"/>
</dbReference>
<dbReference type="EMBL" id="AL021960">
    <property type="protein sequence ID" value="CAA17546.1"/>
    <property type="molecule type" value="Genomic_DNA"/>
</dbReference>
<dbReference type="EMBL" id="AL031187">
    <property type="protein sequence ID" value="CAA20193.1"/>
    <property type="status" value="ALT_SEQ"/>
    <property type="molecule type" value="Genomic_DNA"/>
</dbReference>
<dbReference type="EMBL" id="AL161554">
    <property type="protein sequence ID" value="CAB79127.1"/>
    <property type="molecule type" value="Genomic_DNA"/>
</dbReference>
<dbReference type="EMBL" id="CP002687">
    <property type="protein sequence ID" value="AEE84434.1"/>
    <property type="molecule type" value="Genomic_DNA"/>
</dbReference>
<dbReference type="PIR" id="S34830">
    <property type="entry name" value="S34830"/>
</dbReference>
<dbReference type="RefSeq" id="NP_193859.1">
    <property type="nucleotide sequence ID" value="NM_118246.2"/>
</dbReference>
<dbReference type="SMR" id="Q07970"/>
<dbReference type="BioGRID" id="13167">
    <property type="interactions" value="2"/>
</dbReference>
<dbReference type="FunCoup" id="Q07970">
    <property type="interactions" value="2027"/>
</dbReference>
<dbReference type="STRING" id="3702.Q07970"/>
<dbReference type="iPTMnet" id="Q07970"/>
<dbReference type="PaxDb" id="3702-AT4G21270.1"/>
<dbReference type="ProteomicsDB" id="238202"/>
<dbReference type="EnsemblPlants" id="AT4G21270.1">
    <property type="protein sequence ID" value="AT4G21270.1"/>
    <property type="gene ID" value="AT4G21270"/>
</dbReference>
<dbReference type="GeneID" id="827876"/>
<dbReference type="Gramene" id="AT4G21270.1">
    <property type="protein sequence ID" value="AT4G21270.1"/>
    <property type="gene ID" value="AT4G21270"/>
</dbReference>
<dbReference type="KEGG" id="ath:AT4G21270"/>
<dbReference type="Araport" id="AT4G21270"/>
<dbReference type="TAIR" id="AT4G21270">
    <property type="gene designation" value="ATK1"/>
</dbReference>
<dbReference type="eggNOG" id="KOG0239">
    <property type="taxonomic scope" value="Eukaryota"/>
</dbReference>
<dbReference type="HOGENOM" id="CLU_001485_12_2_1"/>
<dbReference type="InParanoid" id="Q07970"/>
<dbReference type="OMA" id="KQYTITH"/>
<dbReference type="OrthoDB" id="3176171at2759"/>
<dbReference type="PhylomeDB" id="Q07970"/>
<dbReference type="PRO" id="PR:Q07970"/>
<dbReference type="Proteomes" id="UP000006548">
    <property type="component" value="Chromosome 4"/>
</dbReference>
<dbReference type="ExpressionAtlas" id="Q07970">
    <property type="expression patterns" value="baseline and differential"/>
</dbReference>
<dbReference type="GO" id="GO:0005737">
    <property type="term" value="C:cytoplasm"/>
    <property type="evidence" value="ECO:0000314"/>
    <property type="project" value="TAIR"/>
</dbReference>
<dbReference type="GO" id="GO:0000776">
    <property type="term" value="C:kinetochore"/>
    <property type="evidence" value="ECO:0007669"/>
    <property type="project" value="UniProtKB-KW"/>
</dbReference>
<dbReference type="GO" id="GO:0005874">
    <property type="term" value="C:microtubule"/>
    <property type="evidence" value="ECO:0007669"/>
    <property type="project" value="UniProtKB-KW"/>
</dbReference>
<dbReference type="GO" id="GO:0005872">
    <property type="term" value="C:minus-end kinesin complex"/>
    <property type="evidence" value="ECO:0000304"/>
    <property type="project" value="TAIR"/>
</dbReference>
<dbReference type="GO" id="GO:0005634">
    <property type="term" value="C:nucleus"/>
    <property type="evidence" value="ECO:0000314"/>
    <property type="project" value="TAIR"/>
</dbReference>
<dbReference type="GO" id="GO:0009524">
    <property type="term" value="C:phragmoplast"/>
    <property type="evidence" value="ECO:0000314"/>
    <property type="project" value="TAIR"/>
</dbReference>
<dbReference type="GO" id="GO:0005819">
    <property type="term" value="C:spindle"/>
    <property type="evidence" value="ECO:0007669"/>
    <property type="project" value="UniProtKB-SubCell"/>
</dbReference>
<dbReference type="GO" id="GO:0005524">
    <property type="term" value="F:ATP binding"/>
    <property type="evidence" value="ECO:0007669"/>
    <property type="project" value="UniProtKB-KW"/>
</dbReference>
<dbReference type="GO" id="GO:0008017">
    <property type="term" value="F:microtubule binding"/>
    <property type="evidence" value="ECO:0007669"/>
    <property type="project" value="InterPro"/>
</dbReference>
<dbReference type="GO" id="GO:0008569">
    <property type="term" value="F:minus-end-directed microtubule motor activity"/>
    <property type="evidence" value="ECO:0000314"/>
    <property type="project" value="TAIR"/>
</dbReference>
<dbReference type="GO" id="GO:0009971">
    <property type="term" value="P:anastral spindle assembly involved in male meiosis"/>
    <property type="evidence" value="ECO:0000315"/>
    <property type="project" value="TAIR"/>
</dbReference>
<dbReference type="GO" id="GO:0051301">
    <property type="term" value="P:cell division"/>
    <property type="evidence" value="ECO:0007669"/>
    <property type="project" value="UniProtKB-KW"/>
</dbReference>
<dbReference type="GO" id="GO:0007018">
    <property type="term" value="P:microtubule-based movement"/>
    <property type="evidence" value="ECO:0007669"/>
    <property type="project" value="InterPro"/>
</dbReference>
<dbReference type="CDD" id="cd01366">
    <property type="entry name" value="KISc_C_terminal"/>
    <property type="match status" value="1"/>
</dbReference>
<dbReference type="FunFam" id="3.40.850.10:FF:000048">
    <property type="entry name" value="Kinesin-like protein"/>
    <property type="match status" value="1"/>
</dbReference>
<dbReference type="Gene3D" id="1.20.5.340">
    <property type="match status" value="1"/>
</dbReference>
<dbReference type="Gene3D" id="3.40.850.10">
    <property type="entry name" value="Kinesin motor domain"/>
    <property type="match status" value="1"/>
</dbReference>
<dbReference type="InterPro" id="IPR027640">
    <property type="entry name" value="Kinesin-like_fam"/>
</dbReference>
<dbReference type="InterPro" id="IPR019821">
    <property type="entry name" value="Kinesin_motor_CS"/>
</dbReference>
<dbReference type="InterPro" id="IPR001752">
    <property type="entry name" value="Kinesin_motor_dom"/>
</dbReference>
<dbReference type="InterPro" id="IPR036961">
    <property type="entry name" value="Kinesin_motor_dom_sf"/>
</dbReference>
<dbReference type="InterPro" id="IPR027417">
    <property type="entry name" value="P-loop_NTPase"/>
</dbReference>
<dbReference type="PANTHER" id="PTHR47972">
    <property type="entry name" value="KINESIN-LIKE PROTEIN KLP-3"/>
    <property type="match status" value="1"/>
</dbReference>
<dbReference type="PANTHER" id="PTHR47972:SF45">
    <property type="entry name" value="PROTEIN CLARET SEGREGATIONAL"/>
    <property type="match status" value="1"/>
</dbReference>
<dbReference type="Pfam" id="PF00225">
    <property type="entry name" value="Kinesin"/>
    <property type="match status" value="1"/>
</dbReference>
<dbReference type="PRINTS" id="PR00380">
    <property type="entry name" value="KINESINHEAVY"/>
</dbReference>
<dbReference type="SMART" id="SM00129">
    <property type="entry name" value="KISc"/>
    <property type="match status" value="1"/>
</dbReference>
<dbReference type="SUPFAM" id="SSF52540">
    <property type="entry name" value="P-loop containing nucleoside triphosphate hydrolases"/>
    <property type="match status" value="1"/>
</dbReference>
<dbReference type="PROSITE" id="PS00411">
    <property type="entry name" value="KINESIN_MOTOR_1"/>
    <property type="match status" value="1"/>
</dbReference>
<dbReference type="PROSITE" id="PS50067">
    <property type="entry name" value="KINESIN_MOTOR_2"/>
    <property type="match status" value="1"/>
</dbReference>
<gene>
    <name evidence="14" type="primary">KIN14C</name>
    <name evidence="9" type="synonym">ATK1</name>
    <name evidence="13 16" type="synonym">KATA</name>
    <name evidence="15" type="ordered locus">At4g21270</name>
    <name evidence="17" type="ORF">F7J7.210</name>
    <name evidence="18" type="ORF">T6K22.10</name>
</gene>
<sequence>MASRNQNRPPRSPNAKKEGLGGISFDKRRKVETQGGTGRRQAFSAVNKQDVTMNSDVGSIEECGKVDFTKDEILALLSERAKAGKFDTKAKIEQMTDIIKRLKVCVKWFQQADETHVQEKENLKVSLESSEQKYNHKELEARTKEEELQATISKLEENVVSLHEKLAKEESSTQDAIECHRREKEARVAAEKVQASLGEELDKVKEEKMAAKQKVTSLEDMYKRLQEYNTSLQQYNSKLQTDLETVRAALTRAEKEKSSILENLSTLRGHSKSLQDQLSSSRVLQDDAIKQKDSLLSEVTNLRNELQQVRDDRDRQVVQSQKLSEEIRKYQENVGKSSQELDILTAKSGSLEETCSLQKERLNMLEQQLAIANERQKMADASVSLTRTEFEEQKHLLCELQDRLADMEHQLCEGELLRKKLHNTILELKGNIRVFCRVRPLLPDDGGRHEATVIAYPTSTEAQGRGVDLVQSGNKHPFTFDKVFNHEASQEEVFFEISQLVQSALDGYKVCIFAYGQTGSGKTYTMMGRPEAPDQKGLIPRSLEQIFQASQSLGAQGWKYKMQVSMLEIYNETIRDLLSTNRTTSMDLVRADSGTSGKQYTITHDVNGHTHVSDLTIFDVCSVGKISSLLQQAAQSRSVGKTQMNEQSSRSHFVFTMRISGVNESTEQQVQGVLNLIDLAGSERLSKSGATGDRLKETQAINKSLSALSDVIFALAKKEDHVPFRNSKLTYLLQPCLGGDSKTLMFVNISPDPTSAGESLCSLRFAARVNACEIGIPRRQTSTKLLDSRLSYG</sequence>
<reference key="1">
    <citation type="journal article" date="1993" name="Mol. Gen. Genet.">
        <title>Identification of a gene family (kat) encoding kinesin-like proteins in Arabidopsis thaliana and the characterization of secondary structure of KatA.</title>
        <authorList>
            <person name="Mitsui H."/>
            <person name="Yamaguchi-Shinozaki K."/>
            <person name="Shinozaki K."/>
            <person name="Nishikawa K."/>
            <person name="Takahashi H."/>
        </authorList>
    </citation>
    <scope>NUCLEOTIDE SEQUENCE [MRNA]</scope>
    <source>
        <strain>cv. Columbia</strain>
    </source>
</reference>
<reference key="2">
    <citation type="journal article" date="1999" name="Nature">
        <title>Sequence and analysis of chromosome 4 of the plant Arabidopsis thaliana.</title>
        <authorList>
            <person name="Mayer K.F.X."/>
            <person name="Schueller C."/>
            <person name="Wambutt R."/>
            <person name="Murphy G."/>
            <person name="Volckaert G."/>
            <person name="Pohl T."/>
            <person name="Duesterhoeft A."/>
            <person name="Stiekema W."/>
            <person name="Entian K.-D."/>
            <person name="Terryn N."/>
            <person name="Harris B."/>
            <person name="Ansorge W."/>
            <person name="Brandt P."/>
            <person name="Grivell L.A."/>
            <person name="Rieger M."/>
            <person name="Weichselgartner M."/>
            <person name="de Simone V."/>
            <person name="Obermaier B."/>
            <person name="Mache R."/>
            <person name="Mueller M."/>
            <person name="Kreis M."/>
            <person name="Delseny M."/>
            <person name="Puigdomenech P."/>
            <person name="Watson M."/>
            <person name="Schmidtheini T."/>
            <person name="Reichert B."/>
            <person name="Portetelle D."/>
            <person name="Perez-Alonso M."/>
            <person name="Boutry M."/>
            <person name="Bancroft I."/>
            <person name="Vos P."/>
            <person name="Hoheisel J."/>
            <person name="Zimmermann W."/>
            <person name="Wedler H."/>
            <person name="Ridley P."/>
            <person name="Langham S.-A."/>
            <person name="McCullagh B."/>
            <person name="Bilham L."/>
            <person name="Robben J."/>
            <person name="van der Schueren J."/>
            <person name="Grymonprez B."/>
            <person name="Chuang Y.-J."/>
            <person name="Vandenbussche F."/>
            <person name="Braeken M."/>
            <person name="Weltjens I."/>
            <person name="Voet M."/>
            <person name="Bastiaens I."/>
            <person name="Aert R."/>
            <person name="Defoor E."/>
            <person name="Weitzenegger T."/>
            <person name="Bothe G."/>
            <person name="Ramsperger U."/>
            <person name="Hilbert H."/>
            <person name="Braun M."/>
            <person name="Holzer E."/>
            <person name="Brandt A."/>
            <person name="Peters S."/>
            <person name="van Staveren M."/>
            <person name="Dirkse W."/>
            <person name="Mooijman P."/>
            <person name="Klein Lankhorst R."/>
            <person name="Rose M."/>
            <person name="Hauf J."/>
            <person name="Koetter P."/>
            <person name="Berneiser S."/>
            <person name="Hempel S."/>
            <person name="Feldpausch M."/>
            <person name="Lamberth S."/>
            <person name="Van den Daele H."/>
            <person name="De Keyser A."/>
            <person name="Buysshaert C."/>
            <person name="Gielen J."/>
            <person name="Villarroel R."/>
            <person name="De Clercq R."/>
            <person name="van Montagu M."/>
            <person name="Rogers J."/>
            <person name="Cronin A."/>
            <person name="Quail M.A."/>
            <person name="Bray-Allen S."/>
            <person name="Clark L."/>
            <person name="Doggett J."/>
            <person name="Hall S."/>
            <person name="Kay M."/>
            <person name="Lennard N."/>
            <person name="McLay K."/>
            <person name="Mayes R."/>
            <person name="Pettett A."/>
            <person name="Rajandream M.A."/>
            <person name="Lyne M."/>
            <person name="Benes V."/>
            <person name="Rechmann S."/>
            <person name="Borkova D."/>
            <person name="Bloecker H."/>
            <person name="Scharfe M."/>
            <person name="Grimm M."/>
            <person name="Loehnert T.-H."/>
            <person name="Dose S."/>
            <person name="de Haan M."/>
            <person name="Maarse A.C."/>
            <person name="Schaefer M."/>
            <person name="Mueller-Auer S."/>
            <person name="Gabel C."/>
            <person name="Fuchs M."/>
            <person name="Fartmann B."/>
            <person name="Granderath K."/>
            <person name="Dauner D."/>
            <person name="Herzl A."/>
            <person name="Neumann S."/>
            <person name="Argiriou A."/>
            <person name="Vitale D."/>
            <person name="Liguori R."/>
            <person name="Piravandi E."/>
            <person name="Massenet O."/>
            <person name="Quigley F."/>
            <person name="Clabauld G."/>
            <person name="Muendlein A."/>
            <person name="Felber R."/>
            <person name="Schnabl S."/>
            <person name="Hiller R."/>
            <person name="Schmidt W."/>
            <person name="Lecharny A."/>
            <person name="Aubourg S."/>
            <person name="Chefdor F."/>
            <person name="Cooke R."/>
            <person name="Berger C."/>
            <person name="Monfort A."/>
            <person name="Casacuberta E."/>
            <person name="Gibbons T."/>
            <person name="Weber N."/>
            <person name="Vandenbol M."/>
            <person name="Bargues M."/>
            <person name="Terol J."/>
            <person name="Torres A."/>
            <person name="Perez-Perez A."/>
            <person name="Purnelle B."/>
            <person name="Bent E."/>
            <person name="Johnson S."/>
            <person name="Tacon D."/>
            <person name="Jesse T."/>
            <person name="Heijnen L."/>
            <person name="Schwarz S."/>
            <person name="Scholler P."/>
            <person name="Heber S."/>
            <person name="Francs P."/>
            <person name="Bielke C."/>
            <person name="Frishman D."/>
            <person name="Haase D."/>
            <person name="Lemcke K."/>
            <person name="Mewes H.-W."/>
            <person name="Stocker S."/>
            <person name="Zaccaria P."/>
            <person name="Bevan M."/>
            <person name="Wilson R.K."/>
            <person name="de la Bastide M."/>
            <person name="Habermann K."/>
            <person name="Parnell L."/>
            <person name="Dedhia N."/>
            <person name="Gnoj L."/>
            <person name="Schutz K."/>
            <person name="Huang E."/>
            <person name="Spiegel L."/>
            <person name="Sekhon M."/>
            <person name="Murray J."/>
            <person name="Sheet P."/>
            <person name="Cordes M."/>
            <person name="Abu-Threideh J."/>
            <person name="Stoneking T."/>
            <person name="Kalicki J."/>
            <person name="Graves T."/>
            <person name="Harmon G."/>
            <person name="Edwards J."/>
            <person name="Latreille P."/>
            <person name="Courtney L."/>
            <person name="Cloud J."/>
            <person name="Abbott A."/>
            <person name="Scott K."/>
            <person name="Johnson D."/>
            <person name="Minx P."/>
            <person name="Bentley D."/>
            <person name="Fulton B."/>
            <person name="Miller N."/>
            <person name="Greco T."/>
            <person name="Kemp K."/>
            <person name="Kramer J."/>
            <person name="Fulton L."/>
            <person name="Mardis E."/>
            <person name="Dante M."/>
            <person name="Pepin K."/>
            <person name="Hillier L.W."/>
            <person name="Nelson J."/>
            <person name="Spieth J."/>
            <person name="Ryan E."/>
            <person name="Andrews S."/>
            <person name="Geisel C."/>
            <person name="Layman D."/>
            <person name="Du H."/>
            <person name="Ali J."/>
            <person name="Berghoff A."/>
            <person name="Jones K."/>
            <person name="Drone K."/>
            <person name="Cotton M."/>
            <person name="Joshu C."/>
            <person name="Antonoiu B."/>
            <person name="Zidanic M."/>
            <person name="Strong C."/>
            <person name="Sun H."/>
            <person name="Lamar B."/>
            <person name="Yordan C."/>
            <person name="Ma P."/>
            <person name="Zhong J."/>
            <person name="Preston R."/>
            <person name="Vil D."/>
            <person name="Shekher M."/>
            <person name="Matero A."/>
            <person name="Shah R."/>
            <person name="Swaby I.K."/>
            <person name="O'Shaughnessy A."/>
            <person name="Rodriguez M."/>
            <person name="Hoffman J."/>
            <person name="Till S."/>
            <person name="Granat S."/>
            <person name="Shohdy N."/>
            <person name="Hasegawa A."/>
            <person name="Hameed A."/>
            <person name="Lodhi M."/>
            <person name="Johnson A."/>
            <person name="Chen E."/>
            <person name="Marra M.A."/>
            <person name="Martienssen R."/>
            <person name="McCombie W.R."/>
        </authorList>
    </citation>
    <scope>NUCLEOTIDE SEQUENCE [LARGE SCALE GENOMIC DNA]</scope>
    <source>
        <strain>cv. Columbia</strain>
    </source>
</reference>
<reference key="3">
    <citation type="journal article" date="2017" name="Plant J.">
        <title>Araport11: a complete reannotation of the Arabidopsis thaliana reference genome.</title>
        <authorList>
            <person name="Cheng C.Y."/>
            <person name="Krishnakumar V."/>
            <person name="Chan A.P."/>
            <person name="Thibaud-Nissen F."/>
            <person name="Schobel S."/>
            <person name="Town C.D."/>
        </authorList>
    </citation>
    <scope>GENOME REANNOTATION</scope>
    <source>
        <strain>cv. Columbia</strain>
    </source>
</reference>
<reference key="4">
    <citation type="journal article" date="1996" name="Plant Cell">
        <title>A kinesin-like protein, KatAp, in the cells of arabidopsis and other plants.</title>
        <authorList>
            <person name="Liu B."/>
            <person name="Cyr R.J."/>
            <person name="Palevitz B.A."/>
        </authorList>
    </citation>
    <scope>SUBCELLULAR LOCATION</scope>
</reference>
<reference key="5">
    <citation type="journal article" date="2001" name="BMC Genomics">
        <title>Kinesins in the Arabidopsis genome: a comparative analysis among eukaryotes.</title>
        <authorList>
            <person name="Reddy A.S."/>
            <person name="Day I.S."/>
        </authorList>
    </citation>
    <scope>GENE FAMILY</scope>
</reference>
<reference key="6">
    <citation type="journal article" date="2002" name="Cell Motil. Cytoskeleton">
        <title>Arabidopsis thaliana protein, ATK1, is a minus-end directed kinesin that exhibits non-processive movement.</title>
        <authorList>
            <person name="Marcus A.I."/>
            <person name="Ambrose J.C."/>
            <person name="Blickley L."/>
            <person name="Hancock W.O."/>
            <person name="Cyr R.J."/>
        </authorList>
    </citation>
    <scope>FUNCTION</scope>
</reference>
<reference key="7">
    <citation type="journal article" date="2002" name="Development">
        <title>The Arabidopsis ATK1 gene is required for spindle morphogenesis in male meiosis.</title>
        <authorList>
            <person name="Chen C."/>
            <person name="Marcus A."/>
            <person name="Li W."/>
            <person name="Hu Y."/>
            <person name="Calzada J.-P."/>
            <person name="Grossniklaus U."/>
            <person name="Cyr R.J."/>
            <person name="Ma H."/>
        </authorList>
    </citation>
    <scope>FUNCTION</scope>
    <scope>DISRUPTION PHENOTYPE</scope>
</reference>
<reference key="8">
    <citation type="journal article" date="2003" name="Mol. Biol. Cell">
        <title>A kinesin mutant with an atypical bipolar spindle undergoes normal mitosis.</title>
        <authorList>
            <person name="Marcus A.I."/>
            <person name="Li W."/>
            <person name="Ma H."/>
            <person name="Cyr R.J."/>
        </authorList>
    </citation>
    <scope>FUNCTION</scope>
    <scope>DISRUPTION PHENOTYPE</scope>
</reference>
<reference key="9">
    <citation type="journal article" date="2006" name="BMC Genomics">
        <title>Comprehensive comparative analysis of kinesins in photosynthetic eukaryotes.</title>
        <authorList>
            <person name="Richardson D.N."/>
            <person name="Simmons M.P."/>
            <person name="Reddy A.S."/>
        </authorList>
    </citation>
    <scope>GENE FAMILY</scope>
    <scope>NOMENCLATURE</scope>
</reference>
<reference key="10">
    <citation type="journal article" date="2008" name="Plant J.">
        <title>Functional divergence of the duplicated AtKIN14a and AtKIN14b genes: critical roles in Arabidopsis meiosis and gametophyte development.</title>
        <authorList>
            <person name="Quan L."/>
            <person name="Xiao R."/>
            <person name="Li W."/>
            <person name="Oh S.A."/>
            <person name="Kong H."/>
            <person name="Ambrose J.C."/>
            <person name="Malcos J.L."/>
            <person name="Cyr R."/>
            <person name="Twell D."/>
            <person name="Ma H."/>
        </authorList>
    </citation>
    <scope>FUNCTION</scope>
    <scope>DISRUPTION PHENOTYPE</scope>
</reference>
<reference key="11">
    <citation type="journal article" date="2012" name="Protoplasma">
        <title>Functions of the Arabidopsis kinesin superfamily of microtubule-based motor proteins.</title>
        <authorList>
            <person name="Zhu C."/>
            <person name="Dixit R."/>
        </authorList>
    </citation>
    <scope>REVIEW</scope>
</reference>
<comment type="function">
    <text evidence="4 5 6 7">Kinesin that supports microtubule movement in an ATP-dependent manner and has a minus-end directed polarity. Plays a crucial role in spindle morphogenesis in male meiosis. In mitosis, is required for normal microtubule accumulation at the spindle poles during prophase and may play a role in spindle assembly during prometaphase.</text>
</comment>
<comment type="subcellular location">
    <subcellularLocation>
        <location evidence="8">Cytoplasm</location>
        <location evidence="8">Cytoskeleton</location>
        <location evidence="8">Spindle</location>
    </subcellularLocation>
    <subcellularLocation>
        <location evidence="8">Cytoplasm</location>
        <location evidence="8">Cytoskeleton</location>
        <location evidence="8">Phragmoplast</location>
    </subcellularLocation>
    <subcellularLocation>
        <location evidence="8">Chromosome</location>
        <location evidence="8">Centromere</location>
        <location evidence="8">Kinetochore</location>
    </subcellularLocation>
    <subcellularLocation>
        <location evidence="8">Cytoplasm</location>
        <location evidence="8">Cytoskeleton</location>
    </subcellularLocation>
    <text evidence="8">Colocalizes with microtubules during preprophase and cytokinesis. In M-phase, locates to the preprophase band. Present mainly in the midzone at metaphase and later during anaphase. Associated with the ends of the kinetochore fibers near the kinetochores. Detected on the phragmoplast by late cytokinesis.</text>
</comment>
<comment type="domain">
    <text>Composed of three structural domains; a small globular N-terminal, a central alpha-helical coiled coil and a large globular C-terminal which is responsible for the motor activity (it hydrolyzes ATP and binds microtubules).</text>
</comment>
<comment type="disruption phenotype">
    <text evidence="4 6 7">Plants show defects in male meiosis, producing an abnormal number of microspores of variable sizes. Dividing cells of mutant plants lack spindle bipolarity in metaphase of mitosis. Kin14c and kin14d double mutant is gametophytically lethal (PubMed:18088313).</text>
</comment>
<comment type="similarity">
    <text evidence="10">Belongs to the TRAFAC class myosin-kinesin ATPase superfamily. Kinesin family. KIN-14 subfamily.</text>
</comment>
<comment type="sequence caution" evidence="14">
    <conflict type="erroneous gene model prediction">
        <sequence resource="EMBL-CDS" id="CAA20193"/>
    </conflict>
</comment>
<accession>Q07970</accession>
<accession>Q7FKK6</accession>
<feature type="chain" id="PRO_0000125380" description="Kinesin-like protein KIN-14C">
    <location>
        <begin position="1"/>
        <end position="793"/>
    </location>
</feature>
<feature type="domain" description="Kinesin motor" evidence="2">
    <location>
        <begin position="431"/>
        <end position="772"/>
    </location>
</feature>
<feature type="region of interest" description="Globular">
    <location>
        <begin position="1"/>
        <end position="69"/>
    </location>
</feature>
<feature type="region of interest" description="Disordered" evidence="3">
    <location>
        <begin position="1"/>
        <end position="43"/>
    </location>
</feature>
<feature type="coiled-coil region" evidence="1">
    <location>
        <begin position="120"/>
        <end position="375"/>
    </location>
</feature>
<feature type="compositionally biased region" description="Basic and acidic residues" evidence="3">
    <location>
        <begin position="15"/>
        <end position="32"/>
    </location>
</feature>
<feature type="binding site" evidence="2">
    <location>
        <begin position="516"/>
        <end position="523"/>
    </location>
    <ligand>
        <name>ATP</name>
        <dbReference type="ChEBI" id="CHEBI:30616"/>
    </ligand>
</feature>